<reference key="1">
    <citation type="journal article" date="2010" name="Stand. Genomic Sci.">
        <title>Complete genome sequence of Rhizobium leguminosarum bv trifolii strain WSM2304, an effective microsymbiont of the South American clover Trifolium polymorphum.</title>
        <authorList>
            <person name="Reeve W."/>
            <person name="O'Hara G."/>
            <person name="Chain P."/>
            <person name="Ardley J."/>
            <person name="Brau L."/>
            <person name="Nandesena K."/>
            <person name="Tiwari R."/>
            <person name="Malfatti S."/>
            <person name="Kiss H."/>
            <person name="Lapidus A."/>
            <person name="Copeland A."/>
            <person name="Nolan M."/>
            <person name="Land M."/>
            <person name="Ivanova N."/>
            <person name="Mavromatis K."/>
            <person name="Markowitz V."/>
            <person name="Kyrpides N."/>
            <person name="Melino V."/>
            <person name="Denton M."/>
            <person name="Yates R."/>
            <person name="Howieson J."/>
        </authorList>
    </citation>
    <scope>NUCLEOTIDE SEQUENCE [LARGE SCALE GENOMIC DNA]</scope>
    <source>
        <strain>WSM2304</strain>
    </source>
</reference>
<dbReference type="EC" id="1.14.-.-" evidence="1"/>
<dbReference type="EMBL" id="CP001191">
    <property type="protein sequence ID" value="ACI56668.1"/>
    <property type="molecule type" value="Genomic_DNA"/>
</dbReference>
<dbReference type="RefSeq" id="WP_012558990.1">
    <property type="nucleotide sequence ID" value="NC_011369.1"/>
</dbReference>
<dbReference type="SMR" id="B5ZQU6"/>
<dbReference type="STRING" id="395492.Rleg2_3401"/>
<dbReference type="KEGG" id="rlt:Rleg2_3401"/>
<dbReference type="eggNOG" id="COG1054">
    <property type="taxonomic scope" value="Bacteria"/>
</dbReference>
<dbReference type="HOGENOM" id="CLU_038878_0_0_5"/>
<dbReference type="Proteomes" id="UP000008330">
    <property type="component" value="Chromosome"/>
</dbReference>
<dbReference type="GO" id="GO:0016705">
    <property type="term" value="F:oxidoreductase activity, acting on paired donors, with incorporation or reduction of molecular oxygen"/>
    <property type="evidence" value="ECO:0007669"/>
    <property type="project" value="UniProtKB-UniRule"/>
</dbReference>
<dbReference type="GO" id="GO:0006400">
    <property type="term" value="P:tRNA modification"/>
    <property type="evidence" value="ECO:0007669"/>
    <property type="project" value="UniProtKB-UniRule"/>
</dbReference>
<dbReference type="CDD" id="cd01518">
    <property type="entry name" value="RHOD_YceA"/>
    <property type="match status" value="1"/>
</dbReference>
<dbReference type="Gene3D" id="3.30.70.100">
    <property type="match status" value="1"/>
</dbReference>
<dbReference type="Gene3D" id="3.40.250.10">
    <property type="entry name" value="Rhodanese-like domain"/>
    <property type="match status" value="1"/>
</dbReference>
<dbReference type="HAMAP" id="MF_00469">
    <property type="entry name" value="TrhO"/>
    <property type="match status" value="1"/>
</dbReference>
<dbReference type="InterPro" id="IPR001763">
    <property type="entry name" value="Rhodanese-like_dom"/>
</dbReference>
<dbReference type="InterPro" id="IPR036873">
    <property type="entry name" value="Rhodanese-like_dom_sf"/>
</dbReference>
<dbReference type="InterPro" id="IPR020936">
    <property type="entry name" value="TrhO"/>
</dbReference>
<dbReference type="InterPro" id="IPR040503">
    <property type="entry name" value="TRHO_N"/>
</dbReference>
<dbReference type="NCBIfam" id="NF001136">
    <property type="entry name" value="PRK00142.1-4"/>
    <property type="match status" value="1"/>
</dbReference>
<dbReference type="PANTHER" id="PTHR43268:SF3">
    <property type="entry name" value="RHODANESE-LIKE DOMAIN-CONTAINING PROTEIN 7-RELATED"/>
    <property type="match status" value="1"/>
</dbReference>
<dbReference type="PANTHER" id="PTHR43268">
    <property type="entry name" value="THIOSULFATE SULFURTRANSFERASE/RHODANESE-LIKE DOMAIN-CONTAINING PROTEIN 2"/>
    <property type="match status" value="1"/>
</dbReference>
<dbReference type="Pfam" id="PF00581">
    <property type="entry name" value="Rhodanese"/>
    <property type="match status" value="1"/>
</dbReference>
<dbReference type="Pfam" id="PF17773">
    <property type="entry name" value="UPF0176_N"/>
    <property type="match status" value="1"/>
</dbReference>
<dbReference type="SMART" id="SM00450">
    <property type="entry name" value="RHOD"/>
    <property type="match status" value="1"/>
</dbReference>
<dbReference type="SUPFAM" id="SSF52821">
    <property type="entry name" value="Rhodanese/Cell cycle control phosphatase"/>
    <property type="match status" value="1"/>
</dbReference>
<dbReference type="PROSITE" id="PS50206">
    <property type="entry name" value="RHODANESE_3"/>
    <property type="match status" value="1"/>
</dbReference>
<feature type="chain" id="PRO_1000200369" description="tRNA uridine(34) hydroxylase">
    <location>
        <begin position="1"/>
        <end position="309"/>
    </location>
</feature>
<feature type="domain" description="Rhodanese" evidence="1">
    <location>
        <begin position="130"/>
        <end position="224"/>
    </location>
</feature>
<feature type="active site" description="Cysteine persulfide intermediate" evidence="1">
    <location>
        <position position="184"/>
    </location>
</feature>
<proteinExistence type="inferred from homology"/>
<keyword id="KW-0560">Oxidoreductase</keyword>
<keyword id="KW-1185">Reference proteome</keyword>
<keyword id="KW-0819">tRNA processing</keyword>
<organism>
    <name type="scientific">Rhizobium leguminosarum bv. trifolii (strain WSM2304)</name>
    <dbReference type="NCBI Taxonomy" id="395492"/>
    <lineage>
        <taxon>Bacteria</taxon>
        <taxon>Pseudomonadati</taxon>
        <taxon>Pseudomonadota</taxon>
        <taxon>Alphaproteobacteria</taxon>
        <taxon>Hyphomicrobiales</taxon>
        <taxon>Rhizobiaceae</taxon>
        <taxon>Rhizobium/Agrobacterium group</taxon>
        <taxon>Rhizobium</taxon>
    </lineage>
</organism>
<protein>
    <recommendedName>
        <fullName evidence="1">tRNA uridine(34) hydroxylase</fullName>
        <ecNumber evidence="1">1.14.-.-</ecNumber>
    </recommendedName>
    <alternativeName>
        <fullName evidence="1">tRNA hydroxylation protein O</fullName>
    </alternativeName>
</protein>
<name>TRHO_RHILW</name>
<gene>
    <name evidence="1" type="primary">trhO</name>
    <name type="ordered locus">Rleg2_3401</name>
</gene>
<evidence type="ECO:0000255" key="1">
    <source>
        <dbReference type="HAMAP-Rule" id="MF_00469"/>
    </source>
</evidence>
<comment type="function">
    <text evidence="1">Catalyzes oxygen-dependent 5-hydroxyuridine (ho5U) modification at position 34 in tRNAs.</text>
</comment>
<comment type="catalytic activity">
    <reaction evidence="1">
        <text>uridine(34) in tRNA + AH2 + O2 = 5-hydroxyuridine(34) in tRNA + A + H2O</text>
        <dbReference type="Rhea" id="RHEA:64224"/>
        <dbReference type="Rhea" id="RHEA-COMP:11727"/>
        <dbReference type="Rhea" id="RHEA-COMP:13381"/>
        <dbReference type="ChEBI" id="CHEBI:13193"/>
        <dbReference type="ChEBI" id="CHEBI:15377"/>
        <dbReference type="ChEBI" id="CHEBI:15379"/>
        <dbReference type="ChEBI" id="CHEBI:17499"/>
        <dbReference type="ChEBI" id="CHEBI:65315"/>
        <dbReference type="ChEBI" id="CHEBI:136877"/>
    </reaction>
</comment>
<comment type="similarity">
    <text evidence="1">Belongs to the TrhO family.</text>
</comment>
<accession>B5ZQU6</accession>
<sequence>MTDSLTHTSPFLVAALYHFVSVPRFENLQALLQTLCEQSGVKGTLLLAHEGINGTIAGPDAGIAAVLSFLRAQPEFSGLEHKESRASKMPFLRMKVKLKKEIVTMGVEDIDPNKVVGTYVAPQEWNALISDPDTIVIDTRNDYETAIGTFRGALDPKTKTFREFPDWVRSNSGLHNKPKIAMYCTGGIRCEKATAFMKAEGFDEVYHLKGGILKYLEEVPQEESLWDGACFVFDERVSVEHGLKEGEHRLCHACRNPITAEEITSPLYEEGVSCSHCYDTRTEEDRLRYRQRQHQIALARKRGQRHIGS</sequence>